<reference key="1">
    <citation type="journal article" date="2001" name="Lancet">
        <title>Whole genome sequencing of meticillin-resistant Staphylococcus aureus.</title>
        <authorList>
            <person name="Kuroda M."/>
            <person name="Ohta T."/>
            <person name="Uchiyama I."/>
            <person name="Baba T."/>
            <person name="Yuzawa H."/>
            <person name="Kobayashi I."/>
            <person name="Cui L."/>
            <person name="Oguchi A."/>
            <person name="Aoki K."/>
            <person name="Nagai Y."/>
            <person name="Lian J.-Q."/>
            <person name="Ito T."/>
            <person name="Kanamori M."/>
            <person name="Matsumaru H."/>
            <person name="Maruyama A."/>
            <person name="Murakami H."/>
            <person name="Hosoyama A."/>
            <person name="Mizutani-Ui Y."/>
            <person name="Takahashi N.K."/>
            <person name="Sawano T."/>
            <person name="Inoue R."/>
            <person name="Kaito C."/>
            <person name="Sekimizu K."/>
            <person name="Hirakawa H."/>
            <person name="Kuhara S."/>
            <person name="Goto S."/>
            <person name="Yabuzaki J."/>
            <person name="Kanehisa M."/>
            <person name="Yamashita A."/>
            <person name="Oshima K."/>
            <person name="Furuya K."/>
            <person name="Yoshino C."/>
            <person name="Shiba T."/>
            <person name="Hattori M."/>
            <person name="Ogasawara N."/>
            <person name="Hayashi H."/>
            <person name="Hiramatsu K."/>
        </authorList>
    </citation>
    <scope>NUCLEOTIDE SEQUENCE [LARGE SCALE GENOMIC DNA]</scope>
    <source>
        <strain>Mu50 / ATCC 700699</strain>
    </source>
</reference>
<reference key="2">
    <citation type="journal article" date="2006" name="Nat. Struct. Mol. Biol.">
        <title>Crystal structure of Staphylococcus aureus tRNA adenosine deaminase TadA in complex with RNA.</title>
        <authorList>
            <person name="Losey H.C."/>
            <person name="Ruthenburg A.J."/>
            <person name="Verdine G.L."/>
        </authorList>
    </citation>
    <scope>X-RAY CRYSTALLOGRAPHY (2.00 ANGSTROMS) IN COMPLEX WITH ZINC AND RNA</scope>
    <scope>COFACTOR</scope>
    <scope>SUBUNIT</scope>
    <source>
        <strain>Mu50 / ATCC 700699</strain>
    </source>
</reference>
<feature type="chain" id="PRO_0000423949" description="tRNA-specific adenosine deaminase">
    <location>
        <begin position="1"/>
        <end position="156"/>
    </location>
</feature>
<feature type="domain" description="CMP/dCMP-type deaminase" evidence="2">
    <location>
        <begin position="2"/>
        <end position="120"/>
    </location>
</feature>
<feature type="active site" description="Proton donor" evidence="1">
    <location>
        <position position="55"/>
    </location>
</feature>
<feature type="binding site" evidence="1 3">
    <location>
        <position position="53"/>
    </location>
    <ligand>
        <name>Zn(2+)</name>
        <dbReference type="ChEBI" id="CHEBI:29105"/>
        <note>catalytic</note>
    </ligand>
</feature>
<feature type="binding site" evidence="1 3">
    <location>
        <position position="83"/>
    </location>
    <ligand>
        <name>Zn(2+)</name>
        <dbReference type="ChEBI" id="CHEBI:29105"/>
        <note>catalytic</note>
    </ligand>
</feature>
<feature type="binding site" evidence="1 3">
    <location>
        <position position="86"/>
    </location>
    <ligand>
        <name>Zn(2+)</name>
        <dbReference type="ChEBI" id="CHEBI:29105"/>
        <note>catalytic</note>
    </ligand>
</feature>
<feature type="helix" evidence="4">
    <location>
        <begin position="2"/>
        <end position="20"/>
    </location>
</feature>
<feature type="strand" evidence="4">
    <location>
        <begin position="27"/>
        <end position="32"/>
    </location>
</feature>
<feature type="strand" evidence="4">
    <location>
        <begin position="35"/>
        <end position="41"/>
    </location>
</feature>
<feature type="helix" evidence="4">
    <location>
        <begin position="44"/>
        <end position="47"/>
    </location>
</feature>
<feature type="helix" evidence="4">
    <location>
        <begin position="54"/>
        <end position="66"/>
    </location>
</feature>
<feature type="strand" evidence="4">
    <location>
        <begin position="74"/>
        <end position="80"/>
    </location>
</feature>
<feature type="helix" evidence="4">
    <location>
        <begin position="84"/>
        <end position="92"/>
    </location>
</feature>
<feature type="strand" evidence="4">
    <location>
        <begin position="96"/>
        <end position="102"/>
    </location>
</feature>
<feature type="turn" evidence="4">
    <location>
        <begin position="105"/>
        <end position="107"/>
    </location>
</feature>
<feature type="strand" evidence="4">
    <location>
        <begin position="127"/>
        <end position="129"/>
    </location>
</feature>
<feature type="helix" evidence="4">
    <location>
        <begin position="134"/>
        <end position="150"/>
    </location>
</feature>
<keyword id="KW-0002">3D-structure</keyword>
<keyword id="KW-0378">Hydrolase</keyword>
<keyword id="KW-0479">Metal-binding</keyword>
<keyword id="KW-0819">tRNA processing</keyword>
<keyword id="KW-0862">Zinc</keyword>
<sequence length="156" mass="17090">MTNDIYFMTLAIEEAKKAAQLGEVPIGAIITKDDEVIARAHNLRETLQQPTAHAEHIAIERAAKVLGSWRLEGCTLYVTLEPCVMCAGTIVMSRIPRVVYGADDPKGGCSGSLMNLLQQSNFNHRAIVDKGVLKEACSTLLTTFFKNLRANKKSTN</sequence>
<name>TADA_STAAM</name>
<gene>
    <name evidence="1" type="primary">tadA</name>
    <name type="ordered locus">SAV0558</name>
</gene>
<evidence type="ECO:0000255" key="1">
    <source>
        <dbReference type="HAMAP-Rule" id="MF_00972"/>
    </source>
</evidence>
<evidence type="ECO:0000255" key="2">
    <source>
        <dbReference type="PROSITE-ProRule" id="PRU01083"/>
    </source>
</evidence>
<evidence type="ECO:0000269" key="3">
    <source>
    </source>
</evidence>
<evidence type="ECO:0007829" key="4">
    <source>
        <dbReference type="PDB" id="2B3J"/>
    </source>
</evidence>
<proteinExistence type="evidence at protein level"/>
<organism>
    <name type="scientific">Staphylococcus aureus (strain Mu50 / ATCC 700699)</name>
    <dbReference type="NCBI Taxonomy" id="158878"/>
    <lineage>
        <taxon>Bacteria</taxon>
        <taxon>Bacillati</taxon>
        <taxon>Bacillota</taxon>
        <taxon>Bacilli</taxon>
        <taxon>Bacillales</taxon>
        <taxon>Staphylococcaceae</taxon>
        <taxon>Staphylococcus</taxon>
    </lineage>
</organism>
<protein>
    <recommendedName>
        <fullName evidence="1">tRNA-specific adenosine deaminase</fullName>
        <ecNumber evidence="1">3.5.4.33</ecNumber>
    </recommendedName>
</protein>
<comment type="function">
    <text evidence="1">Catalyzes the deamination of adenosine to inosine at the wobble position 34 of tRNA(Arg2).</text>
</comment>
<comment type="catalytic activity">
    <reaction evidence="1">
        <text>adenosine(34) in tRNA + H2O + H(+) = inosine(34) in tRNA + NH4(+)</text>
        <dbReference type="Rhea" id="RHEA:43168"/>
        <dbReference type="Rhea" id="RHEA-COMP:10373"/>
        <dbReference type="Rhea" id="RHEA-COMP:10374"/>
        <dbReference type="ChEBI" id="CHEBI:15377"/>
        <dbReference type="ChEBI" id="CHEBI:15378"/>
        <dbReference type="ChEBI" id="CHEBI:28938"/>
        <dbReference type="ChEBI" id="CHEBI:74411"/>
        <dbReference type="ChEBI" id="CHEBI:82852"/>
        <dbReference type="EC" id="3.5.4.33"/>
    </reaction>
</comment>
<comment type="cofactor">
    <cofactor evidence="1 3">
        <name>Zn(2+)</name>
        <dbReference type="ChEBI" id="CHEBI:29105"/>
    </cofactor>
    <text evidence="1 3">Binds 1 zinc ion per subunit.</text>
</comment>
<comment type="subunit">
    <text evidence="1 3">Homodimer.</text>
</comment>
<comment type="similarity">
    <text evidence="1">Belongs to the cytidine and deoxycytidylate deaminase family.</text>
</comment>
<dbReference type="EC" id="3.5.4.33" evidence="1"/>
<dbReference type="EMBL" id="BA000017">
    <property type="protein sequence ID" value="BAB56720.1"/>
    <property type="molecule type" value="Genomic_DNA"/>
</dbReference>
<dbReference type="PIR" id="H89823">
    <property type="entry name" value="H89823"/>
</dbReference>
<dbReference type="RefSeq" id="WP_000180281.1">
    <property type="nucleotide sequence ID" value="NC_002758.2"/>
</dbReference>
<dbReference type="PDB" id="2B3J">
    <property type="method" value="X-ray"/>
    <property type="resolution" value="2.00 A"/>
    <property type="chains" value="A/B/C/D=1-156"/>
</dbReference>
<dbReference type="PDBsum" id="2B3J"/>
<dbReference type="SMR" id="Q99W51"/>
<dbReference type="DIP" id="DIP-29048N"/>
<dbReference type="KEGG" id="sav:SAV0558"/>
<dbReference type="HOGENOM" id="CLU_025810_3_2_9"/>
<dbReference type="PhylomeDB" id="Q99W51"/>
<dbReference type="BRENDA" id="3.5.4.33">
    <property type="organism ID" value="3352"/>
</dbReference>
<dbReference type="EvolutionaryTrace" id="Q99W51"/>
<dbReference type="Proteomes" id="UP000002481">
    <property type="component" value="Chromosome"/>
</dbReference>
<dbReference type="GO" id="GO:0052717">
    <property type="term" value="F:tRNA-specific adenosine-34 deaminase activity"/>
    <property type="evidence" value="ECO:0007669"/>
    <property type="project" value="UniProtKB-UniRule"/>
</dbReference>
<dbReference type="GO" id="GO:0008270">
    <property type="term" value="F:zinc ion binding"/>
    <property type="evidence" value="ECO:0007669"/>
    <property type="project" value="UniProtKB-UniRule"/>
</dbReference>
<dbReference type="GO" id="GO:0002100">
    <property type="term" value="P:tRNA wobble adenosine to inosine editing"/>
    <property type="evidence" value="ECO:0007669"/>
    <property type="project" value="UniProtKB-UniRule"/>
</dbReference>
<dbReference type="CDD" id="cd01285">
    <property type="entry name" value="nucleoside_deaminase"/>
    <property type="match status" value="1"/>
</dbReference>
<dbReference type="FunFam" id="3.40.140.10:FF:000005">
    <property type="entry name" value="tRNA-specific adenosine deaminase"/>
    <property type="match status" value="1"/>
</dbReference>
<dbReference type="Gene3D" id="3.40.140.10">
    <property type="entry name" value="Cytidine Deaminase, domain 2"/>
    <property type="match status" value="1"/>
</dbReference>
<dbReference type="HAMAP" id="MF_00972">
    <property type="entry name" value="tRNA_aden_deaminase"/>
    <property type="match status" value="1"/>
</dbReference>
<dbReference type="InterPro" id="IPR016192">
    <property type="entry name" value="APOBEC/CMP_deaminase_Zn-bd"/>
</dbReference>
<dbReference type="InterPro" id="IPR002125">
    <property type="entry name" value="CMP_dCMP_dom"/>
</dbReference>
<dbReference type="InterPro" id="IPR016193">
    <property type="entry name" value="Cytidine_deaminase-like"/>
</dbReference>
<dbReference type="InterPro" id="IPR028883">
    <property type="entry name" value="tRNA_aden_deaminase"/>
</dbReference>
<dbReference type="NCBIfam" id="NF008113">
    <property type="entry name" value="PRK10860.1"/>
    <property type="match status" value="1"/>
</dbReference>
<dbReference type="PANTHER" id="PTHR11079">
    <property type="entry name" value="CYTOSINE DEAMINASE FAMILY MEMBER"/>
    <property type="match status" value="1"/>
</dbReference>
<dbReference type="PANTHER" id="PTHR11079:SF202">
    <property type="entry name" value="TRNA-SPECIFIC ADENOSINE DEAMINASE"/>
    <property type="match status" value="1"/>
</dbReference>
<dbReference type="Pfam" id="PF14437">
    <property type="entry name" value="MafB19-deam"/>
    <property type="match status" value="1"/>
</dbReference>
<dbReference type="SUPFAM" id="SSF53927">
    <property type="entry name" value="Cytidine deaminase-like"/>
    <property type="match status" value="1"/>
</dbReference>
<dbReference type="PROSITE" id="PS00903">
    <property type="entry name" value="CYT_DCMP_DEAMINASES_1"/>
    <property type="match status" value="1"/>
</dbReference>
<dbReference type="PROSITE" id="PS51747">
    <property type="entry name" value="CYT_DCMP_DEAMINASES_2"/>
    <property type="match status" value="1"/>
</dbReference>
<accession>Q99W51</accession>